<keyword id="KW-0067">ATP-binding</keyword>
<keyword id="KW-0963">Cytoplasm</keyword>
<keyword id="KW-0347">Helicase</keyword>
<keyword id="KW-0378">Hydrolase</keyword>
<keyword id="KW-0547">Nucleotide-binding</keyword>
<keyword id="KW-0694">RNA-binding</keyword>
<accession>Q8PFZ3</accession>
<protein>
    <recommendedName>
        <fullName evidence="1">ATP-dependent RNA helicase RhlB</fullName>
        <ecNumber evidence="1">3.6.4.13</ecNumber>
    </recommendedName>
</protein>
<proteinExistence type="inferred from homology"/>
<feature type="chain" id="PRO_0000200790" description="ATP-dependent RNA helicase RhlB">
    <location>
        <begin position="1"/>
        <end position="571"/>
    </location>
</feature>
<feature type="domain" description="Helicase ATP-binding" evidence="1">
    <location>
        <begin position="40"/>
        <end position="220"/>
    </location>
</feature>
<feature type="domain" description="Helicase C-terminal" evidence="1">
    <location>
        <begin position="231"/>
        <end position="393"/>
    </location>
</feature>
<feature type="region of interest" description="Disordered" evidence="2">
    <location>
        <begin position="391"/>
        <end position="558"/>
    </location>
</feature>
<feature type="short sequence motif" description="Q motif">
    <location>
        <begin position="9"/>
        <end position="37"/>
    </location>
</feature>
<feature type="short sequence motif" description="DEAD box">
    <location>
        <begin position="166"/>
        <end position="169"/>
    </location>
</feature>
<feature type="compositionally biased region" description="Acidic residues" evidence="2">
    <location>
        <begin position="402"/>
        <end position="411"/>
    </location>
</feature>
<feature type="compositionally biased region" description="Basic and acidic residues" evidence="2">
    <location>
        <begin position="419"/>
        <end position="432"/>
    </location>
</feature>
<feature type="compositionally biased region" description="Gly residues" evidence="2">
    <location>
        <begin position="435"/>
        <end position="448"/>
    </location>
</feature>
<feature type="compositionally biased region" description="Basic and acidic residues" evidence="2">
    <location>
        <begin position="449"/>
        <end position="460"/>
    </location>
</feature>
<feature type="compositionally biased region" description="Low complexity" evidence="2">
    <location>
        <begin position="483"/>
        <end position="497"/>
    </location>
</feature>
<feature type="compositionally biased region" description="Basic residues" evidence="2">
    <location>
        <begin position="503"/>
        <end position="512"/>
    </location>
</feature>
<feature type="compositionally biased region" description="Low complexity" evidence="2">
    <location>
        <begin position="539"/>
        <end position="558"/>
    </location>
</feature>
<feature type="binding site" evidence="1">
    <location>
        <begin position="53"/>
        <end position="60"/>
    </location>
    <ligand>
        <name>ATP</name>
        <dbReference type="ChEBI" id="CHEBI:30616"/>
    </ligand>
</feature>
<reference key="1">
    <citation type="journal article" date="2002" name="Nature">
        <title>Comparison of the genomes of two Xanthomonas pathogens with differing host specificities.</title>
        <authorList>
            <person name="da Silva A.C.R."/>
            <person name="Ferro J.A."/>
            <person name="Reinach F.C."/>
            <person name="Farah C.S."/>
            <person name="Furlan L.R."/>
            <person name="Quaggio R.B."/>
            <person name="Monteiro-Vitorello C.B."/>
            <person name="Van Sluys M.A."/>
            <person name="Almeida N.F. Jr."/>
            <person name="Alves L.M.C."/>
            <person name="do Amaral A.M."/>
            <person name="Bertolini M.C."/>
            <person name="Camargo L.E.A."/>
            <person name="Camarotte G."/>
            <person name="Cannavan F."/>
            <person name="Cardozo J."/>
            <person name="Chambergo F."/>
            <person name="Ciapina L.P."/>
            <person name="Cicarelli R.M.B."/>
            <person name="Coutinho L.L."/>
            <person name="Cursino-Santos J.R."/>
            <person name="El-Dorry H."/>
            <person name="Faria J.B."/>
            <person name="Ferreira A.J.S."/>
            <person name="Ferreira R.C.C."/>
            <person name="Ferro M.I.T."/>
            <person name="Formighieri E.F."/>
            <person name="Franco M.C."/>
            <person name="Greggio C.C."/>
            <person name="Gruber A."/>
            <person name="Katsuyama A.M."/>
            <person name="Kishi L.T."/>
            <person name="Leite R.P."/>
            <person name="Lemos E.G.M."/>
            <person name="Lemos M.V.F."/>
            <person name="Locali E.C."/>
            <person name="Machado M.A."/>
            <person name="Madeira A.M.B.N."/>
            <person name="Martinez-Rossi N.M."/>
            <person name="Martins E.C."/>
            <person name="Meidanis J."/>
            <person name="Menck C.F.M."/>
            <person name="Miyaki C.Y."/>
            <person name="Moon D.H."/>
            <person name="Moreira L.M."/>
            <person name="Novo M.T.M."/>
            <person name="Okura V.K."/>
            <person name="Oliveira M.C."/>
            <person name="Oliveira V.R."/>
            <person name="Pereira H.A."/>
            <person name="Rossi A."/>
            <person name="Sena J.A.D."/>
            <person name="Silva C."/>
            <person name="de Souza R.F."/>
            <person name="Spinola L.A.F."/>
            <person name="Takita M.A."/>
            <person name="Tamura R.E."/>
            <person name="Teixeira E.C."/>
            <person name="Tezza R.I.D."/>
            <person name="Trindade dos Santos M."/>
            <person name="Truffi D."/>
            <person name="Tsai S.M."/>
            <person name="White F.F."/>
            <person name="Setubal J.C."/>
            <person name="Kitajima J.P."/>
        </authorList>
    </citation>
    <scope>NUCLEOTIDE SEQUENCE [LARGE SCALE GENOMIC DNA]</scope>
    <source>
        <strain>306</strain>
    </source>
</reference>
<sequence>MSDKPLTDVTFSSFDLHPALIAGLESAGFTRCTPIQALTLPVALPGGDVAGQAQTGTGKTLAFLVAVMNRLLIRPALADRKPEDPRALILAPTRELAIQIHKDAVKFGADLGLRFALVYGGVDYDKQRELLQQGVDVIIATPGRLIDYVKQHKVVSLHACEICVLDEADRMFDLGFIKDIRFLLRRMPERGTRQTLLFSATLSHRVLELAYEHMNEPEKLVVETESITAARVRQRIYFPSDEEKQTLLLGLLSRSEGARTMVFVNTKAFVERVARTLERHGYRVGVLSGDVPQKKRESLLNRFQKGQLEILVATDVAARGLHIDGVKYVYNYDLPFDAEDYVHRIGRTARLGEEGDAISFACERYAMSLPDIEAYIEQKIPVEPVTSELLTPLPRAPRVPVEGEEADDDAGDSVGTIFREAREQRAAEEQRRGGGRGGPGGSRSGSGGGRRDGAGADGKPRPRRKPRVEGQAPAAAASTEHPVVAAVAAQAPSAGVADAERAPRKRRRRRNGRPVEGAEPALASTPVPAPAAPRKPTQVVAKPVRAAAKPSGSPSLLSRIGRRLRSLVSGN</sequence>
<evidence type="ECO:0000255" key="1">
    <source>
        <dbReference type="HAMAP-Rule" id="MF_00661"/>
    </source>
</evidence>
<evidence type="ECO:0000256" key="2">
    <source>
        <dbReference type="SAM" id="MobiDB-lite"/>
    </source>
</evidence>
<comment type="function">
    <text evidence="1">DEAD-box RNA helicase involved in RNA degradation. Has RNA-dependent ATPase activity and unwinds double-stranded RNA.</text>
</comment>
<comment type="catalytic activity">
    <reaction evidence="1">
        <text>ATP + H2O = ADP + phosphate + H(+)</text>
        <dbReference type="Rhea" id="RHEA:13065"/>
        <dbReference type="ChEBI" id="CHEBI:15377"/>
        <dbReference type="ChEBI" id="CHEBI:15378"/>
        <dbReference type="ChEBI" id="CHEBI:30616"/>
        <dbReference type="ChEBI" id="CHEBI:43474"/>
        <dbReference type="ChEBI" id="CHEBI:456216"/>
        <dbReference type="EC" id="3.6.4.13"/>
    </reaction>
</comment>
<comment type="subunit">
    <text evidence="1">Component of the RNA degradosome, which is a multiprotein complex involved in RNA processing and mRNA degradation.</text>
</comment>
<comment type="subcellular location">
    <subcellularLocation>
        <location evidence="1">Cytoplasm</location>
    </subcellularLocation>
</comment>
<comment type="similarity">
    <text evidence="1">Belongs to the DEAD box helicase family. RhlB subfamily.</text>
</comment>
<dbReference type="EC" id="3.6.4.13" evidence="1"/>
<dbReference type="EMBL" id="AE008923">
    <property type="protein sequence ID" value="AAM38671.1"/>
    <property type="molecule type" value="Genomic_DNA"/>
</dbReference>
<dbReference type="RefSeq" id="WP_011052551.1">
    <property type="nucleotide sequence ID" value="NC_003919.1"/>
</dbReference>
<dbReference type="SMR" id="Q8PFZ3"/>
<dbReference type="GeneID" id="66912850"/>
<dbReference type="KEGG" id="xac:XAC3829"/>
<dbReference type="eggNOG" id="COG0513">
    <property type="taxonomic scope" value="Bacteria"/>
</dbReference>
<dbReference type="HOGENOM" id="CLU_003041_28_4_6"/>
<dbReference type="Proteomes" id="UP000000576">
    <property type="component" value="Chromosome"/>
</dbReference>
<dbReference type="GO" id="GO:0005829">
    <property type="term" value="C:cytosol"/>
    <property type="evidence" value="ECO:0007669"/>
    <property type="project" value="TreeGrafter"/>
</dbReference>
<dbReference type="GO" id="GO:0005524">
    <property type="term" value="F:ATP binding"/>
    <property type="evidence" value="ECO:0007669"/>
    <property type="project" value="UniProtKB-UniRule"/>
</dbReference>
<dbReference type="GO" id="GO:0016887">
    <property type="term" value="F:ATP hydrolysis activity"/>
    <property type="evidence" value="ECO:0007669"/>
    <property type="project" value="RHEA"/>
</dbReference>
<dbReference type="GO" id="GO:0003723">
    <property type="term" value="F:RNA binding"/>
    <property type="evidence" value="ECO:0007669"/>
    <property type="project" value="UniProtKB-UniRule"/>
</dbReference>
<dbReference type="GO" id="GO:0003724">
    <property type="term" value="F:RNA helicase activity"/>
    <property type="evidence" value="ECO:0007669"/>
    <property type="project" value="UniProtKB-UniRule"/>
</dbReference>
<dbReference type="GO" id="GO:0006401">
    <property type="term" value="P:RNA catabolic process"/>
    <property type="evidence" value="ECO:0007669"/>
    <property type="project" value="UniProtKB-UniRule"/>
</dbReference>
<dbReference type="CDD" id="cd00268">
    <property type="entry name" value="DEADc"/>
    <property type="match status" value="1"/>
</dbReference>
<dbReference type="CDD" id="cd18787">
    <property type="entry name" value="SF2_C_DEAD"/>
    <property type="match status" value="1"/>
</dbReference>
<dbReference type="Gene3D" id="3.40.50.300">
    <property type="entry name" value="P-loop containing nucleotide triphosphate hydrolases"/>
    <property type="match status" value="2"/>
</dbReference>
<dbReference type="HAMAP" id="MF_00661">
    <property type="entry name" value="DEAD_helicase_RhlB"/>
    <property type="match status" value="1"/>
</dbReference>
<dbReference type="InterPro" id="IPR011545">
    <property type="entry name" value="DEAD/DEAH_box_helicase_dom"/>
</dbReference>
<dbReference type="InterPro" id="IPR050079">
    <property type="entry name" value="DEAD_box_RNA_helicase"/>
</dbReference>
<dbReference type="InterPro" id="IPR014001">
    <property type="entry name" value="Helicase_ATP-bd"/>
</dbReference>
<dbReference type="InterPro" id="IPR001650">
    <property type="entry name" value="Helicase_C-like"/>
</dbReference>
<dbReference type="InterPro" id="IPR027417">
    <property type="entry name" value="P-loop_NTPase"/>
</dbReference>
<dbReference type="InterPro" id="IPR022077">
    <property type="entry name" value="RhlB"/>
</dbReference>
<dbReference type="InterPro" id="IPR000629">
    <property type="entry name" value="RNA-helicase_DEAD-box_CS"/>
</dbReference>
<dbReference type="InterPro" id="IPR023554">
    <property type="entry name" value="RNA_helicase_ATP-dep_RhlB"/>
</dbReference>
<dbReference type="InterPro" id="IPR014014">
    <property type="entry name" value="RNA_helicase_DEAD_Q_motif"/>
</dbReference>
<dbReference type="NCBIfam" id="NF003390">
    <property type="entry name" value="PRK04537.1"/>
    <property type="match status" value="1"/>
</dbReference>
<dbReference type="PANTHER" id="PTHR47959:SF10">
    <property type="entry name" value="ATP-DEPENDENT RNA HELICASE RHLB"/>
    <property type="match status" value="1"/>
</dbReference>
<dbReference type="PANTHER" id="PTHR47959">
    <property type="entry name" value="ATP-DEPENDENT RNA HELICASE RHLE-RELATED"/>
    <property type="match status" value="1"/>
</dbReference>
<dbReference type="Pfam" id="PF00270">
    <property type="entry name" value="DEAD"/>
    <property type="match status" value="1"/>
</dbReference>
<dbReference type="Pfam" id="PF00271">
    <property type="entry name" value="Helicase_C"/>
    <property type="match status" value="1"/>
</dbReference>
<dbReference type="Pfam" id="PF12300">
    <property type="entry name" value="RhlB"/>
    <property type="match status" value="1"/>
</dbReference>
<dbReference type="SMART" id="SM00487">
    <property type="entry name" value="DEXDc"/>
    <property type="match status" value="1"/>
</dbReference>
<dbReference type="SMART" id="SM00490">
    <property type="entry name" value="HELICc"/>
    <property type="match status" value="1"/>
</dbReference>
<dbReference type="SUPFAM" id="SSF52540">
    <property type="entry name" value="P-loop containing nucleoside triphosphate hydrolases"/>
    <property type="match status" value="1"/>
</dbReference>
<dbReference type="PROSITE" id="PS00039">
    <property type="entry name" value="DEAD_ATP_HELICASE"/>
    <property type="match status" value="1"/>
</dbReference>
<dbReference type="PROSITE" id="PS51192">
    <property type="entry name" value="HELICASE_ATP_BIND_1"/>
    <property type="match status" value="1"/>
</dbReference>
<dbReference type="PROSITE" id="PS51194">
    <property type="entry name" value="HELICASE_CTER"/>
    <property type="match status" value="1"/>
</dbReference>
<dbReference type="PROSITE" id="PS51195">
    <property type="entry name" value="Q_MOTIF"/>
    <property type="match status" value="1"/>
</dbReference>
<organism>
    <name type="scientific">Xanthomonas axonopodis pv. citri (strain 306)</name>
    <dbReference type="NCBI Taxonomy" id="190486"/>
    <lineage>
        <taxon>Bacteria</taxon>
        <taxon>Pseudomonadati</taxon>
        <taxon>Pseudomonadota</taxon>
        <taxon>Gammaproteobacteria</taxon>
        <taxon>Lysobacterales</taxon>
        <taxon>Lysobacteraceae</taxon>
        <taxon>Xanthomonas</taxon>
    </lineage>
</organism>
<gene>
    <name evidence="1" type="primary">rhlB</name>
    <name type="ordered locus">XAC3829</name>
</gene>
<name>RHLB_XANAC</name>